<evidence type="ECO:0000255" key="1">
    <source>
        <dbReference type="HAMAP-Rule" id="MF_01411"/>
    </source>
</evidence>
<protein>
    <recommendedName>
        <fullName evidence="1">LPS-assembly protein LptD</fullName>
    </recommendedName>
</protein>
<sequence>MYRVLRLLPLPLSVAISLSALADEKPPNWGLCPATLPLQGFEQAPGMDKHVVQSRPQLPTNIEGDTLTGTARTPLYQGNVLMARGDQLLGADSVRMDTETDSYVAEGHVRYQDSSILVVADRAEGNQDTDVHKISNIQYQLIGRRGNGVAKSVDIHGQVGQTHEATYTTCDPSQAIWRLRAPEIDVDNVEGFGVARHAVFEVGQWPVLYLPWFKFPIDSRRQTGLLYPQLGYSGRNGFDYAQPIYLNLAPNYDATLYPRYMQKRGFMIDTEFRYLYDDGKWQTRAAFIPNDQLRDKDRGRFSFNGYHNIDNHWQARASLAWVSDTRYMEDFSSRLVGMSSLSSLQSTVGVYGTGETWTAGLMADRWQLTDYSLNESALAYNRQPRLFFNWDKPVLDFLEFGLYSEVVRFKHDDAYLVALQNDGNYLRTGEVIRYYGGTRLDVKPYVSLPFTGASWYVTPTFGWRYSSYYLDSGIAEQLNGSRTPVRSLPIVSLDSGVYLDRDTTVFGRNYLNTLEPRFYYLYVPYRNQSDLPLFDTRAFTFSWGQLFRDSRYTGPDRQNDANQLTLAVTSRWLDQNTGKEDLALSVGQILYFKDSLVTLSDSEERIQKGKSVWVSDVAYNVNDRWTLNATYQWNPNFRRDDLASVRARYLIGSDGIINLAYRYRRNTLDGTTQLKQTDFSFLYPINPRWSAIGRYYYSLLDKKPLEIIGGLQWDSCCLAVRTVLRRHMRDRTGNMDNSIQLEFVFKGLSSVGQDTDRVLRRAILGYYRDDLYLVPPSNTTTDPDAYDPNKIP</sequence>
<name>LPTD_XYLFT</name>
<proteinExistence type="inferred from homology"/>
<gene>
    <name evidence="1" type="primary">lptD</name>
    <name type="synonym">imp</name>
    <name type="synonym">ostA</name>
    <name type="ordered locus">PD_1836</name>
</gene>
<reference key="1">
    <citation type="journal article" date="2003" name="J. Bacteriol.">
        <title>Comparative analyses of the complete genome sequences of Pierce's disease and citrus variegated chlorosis strains of Xylella fastidiosa.</title>
        <authorList>
            <person name="Van Sluys M.A."/>
            <person name="de Oliveira M.C."/>
            <person name="Monteiro-Vitorello C.B."/>
            <person name="Miyaki C.Y."/>
            <person name="Furlan L.R."/>
            <person name="Camargo L.E.A."/>
            <person name="da Silva A.C.R."/>
            <person name="Moon D.H."/>
            <person name="Takita M.A."/>
            <person name="Lemos E.G.M."/>
            <person name="Machado M.A."/>
            <person name="Ferro M.I.T."/>
            <person name="da Silva F.R."/>
            <person name="Goldman M.H.S."/>
            <person name="Goldman G.H."/>
            <person name="Lemos M.V.F."/>
            <person name="El-Dorry H."/>
            <person name="Tsai S.M."/>
            <person name="Carrer H."/>
            <person name="Carraro D.M."/>
            <person name="de Oliveira R.C."/>
            <person name="Nunes L.R."/>
            <person name="Siqueira W.J."/>
            <person name="Coutinho L.L."/>
            <person name="Kimura E.T."/>
            <person name="Ferro E.S."/>
            <person name="Harakava R."/>
            <person name="Kuramae E.E."/>
            <person name="Marino C.L."/>
            <person name="Giglioti E."/>
            <person name="Abreu I.L."/>
            <person name="Alves L.M.C."/>
            <person name="do Amaral A.M."/>
            <person name="Baia G.S."/>
            <person name="Blanco S.R."/>
            <person name="Brito M.S."/>
            <person name="Cannavan F.S."/>
            <person name="Celestino A.V."/>
            <person name="da Cunha A.F."/>
            <person name="Fenille R.C."/>
            <person name="Ferro J.A."/>
            <person name="Formighieri E.F."/>
            <person name="Kishi L.T."/>
            <person name="Leoni S.G."/>
            <person name="Oliveira A.R."/>
            <person name="Rosa V.E. Jr."/>
            <person name="Sassaki F.T."/>
            <person name="Sena J.A.D."/>
            <person name="de Souza A.A."/>
            <person name="Truffi D."/>
            <person name="Tsukumo F."/>
            <person name="Yanai G.M."/>
            <person name="Zaros L.G."/>
            <person name="Civerolo E.L."/>
            <person name="Simpson A.J.G."/>
            <person name="Almeida N.F. Jr."/>
            <person name="Setubal J.C."/>
            <person name="Kitajima J.P."/>
        </authorList>
    </citation>
    <scope>NUCLEOTIDE SEQUENCE [LARGE SCALE GENOMIC DNA]</scope>
    <source>
        <strain>Temecula1 / ATCC 700964</strain>
    </source>
</reference>
<accession>Q87AI9</accession>
<feature type="signal peptide" evidence="1">
    <location>
        <begin position="1"/>
        <end position="22"/>
    </location>
</feature>
<feature type="chain" id="PRO_0000020300" description="LPS-assembly protein LptD">
    <location>
        <begin position="23"/>
        <end position="792"/>
    </location>
</feature>
<keyword id="KW-0998">Cell outer membrane</keyword>
<keyword id="KW-0472">Membrane</keyword>
<keyword id="KW-1185">Reference proteome</keyword>
<keyword id="KW-0732">Signal</keyword>
<dbReference type="EMBL" id="AE009442">
    <property type="protein sequence ID" value="AAO29668.1"/>
    <property type="molecule type" value="Genomic_DNA"/>
</dbReference>
<dbReference type="RefSeq" id="WP_011098274.1">
    <property type="nucleotide sequence ID" value="NC_004556.1"/>
</dbReference>
<dbReference type="SMR" id="Q87AI9"/>
<dbReference type="GeneID" id="93905690"/>
<dbReference type="KEGG" id="xft:PD_1836"/>
<dbReference type="HOGENOM" id="CLU_009039_0_0_6"/>
<dbReference type="Proteomes" id="UP000002516">
    <property type="component" value="Chromosome"/>
</dbReference>
<dbReference type="GO" id="GO:0009279">
    <property type="term" value="C:cell outer membrane"/>
    <property type="evidence" value="ECO:0007669"/>
    <property type="project" value="UniProtKB-SubCell"/>
</dbReference>
<dbReference type="GO" id="GO:1990351">
    <property type="term" value="C:transporter complex"/>
    <property type="evidence" value="ECO:0007669"/>
    <property type="project" value="TreeGrafter"/>
</dbReference>
<dbReference type="GO" id="GO:0043165">
    <property type="term" value="P:Gram-negative-bacterium-type cell outer membrane assembly"/>
    <property type="evidence" value="ECO:0007669"/>
    <property type="project" value="UniProtKB-UniRule"/>
</dbReference>
<dbReference type="GO" id="GO:0015920">
    <property type="term" value="P:lipopolysaccharide transport"/>
    <property type="evidence" value="ECO:0007669"/>
    <property type="project" value="InterPro"/>
</dbReference>
<dbReference type="HAMAP" id="MF_01411">
    <property type="entry name" value="LPS_assembly_LptD"/>
    <property type="match status" value="1"/>
</dbReference>
<dbReference type="InterPro" id="IPR020889">
    <property type="entry name" value="LipoPS_assembly_LptD"/>
</dbReference>
<dbReference type="InterPro" id="IPR050218">
    <property type="entry name" value="LptD"/>
</dbReference>
<dbReference type="InterPro" id="IPR007543">
    <property type="entry name" value="LptD_C"/>
</dbReference>
<dbReference type="NCBIfam" id="NF003358">
    <property type="entry name" value="PRK04423.1"/>
    <property type="match status" value="1"/>
</dbReference>
<dbReference type="PANTHER" id="PTHR30189">
    <property type="entry name" value="LPS-ASSEMBLY PROTEIN"/>
    <property type="match status" value="1"/>
</dbReference>
<dbReference type="PANTHER" id="PTHR30189:SF1">
    <property type="entry name" value="LPS-ASSEMBLY PROTEIN LPTD"/>
    <property type="match status" value="1"/>
</dbReference>
<dbReference type="Pfam" id="PF04453">
    <property type="entry name" value="LptD"/>
    <property type="match status" value="1"/>
</dbReference>
<dbReference type="SUPFAM" id="SSF56935">
    <property type="entry name" value="Porins"/>
    <property type="match status" value="1"/>
</dbReference>
<organism>
    <name type="scientific">Xylella fastidiosa (strain Temecula1 / ATCC 700964)</name>
    <dbReference type="NCBI Taxonomy" id="183190"/>
    <lineage>
        <taxon>Bacteria</taxon>
        <taxon>Pseudomonadati</taxon>
        <taxon>Pseudomonadota</taxon>
        <taxon>Gammaproteobacteria</taxon>
        <taxon>Lysobacterales</taxon>
        <taxon>Lysobacteraceae</taxon>
        <taxon>Xylella</taxon>
    </lineage>
</organism>
<comment type="function">
    <text evidence="1">Together with LptE, is involved in the assembly of lipopolysaccharide (LPS) at the surface of the outer membrane.</text>
</comment>
<comment type="subunit">
    <text evidence="1">Component of the lipopolysaccharide transport and assembly complex. Interacts with LptE and LptA.</text>
</comment>
<comment type="subcellular location">
    <subcellularLocation>
        <location evidence="1">Cell outer membrane</location>
    </subcellularLocation>
</comment>
<comment type="similarity">
    <text evidence="1">Belongs to the LptD family.</text>
</comment>